<sequence length="329" mass="35196">MFSLSFIVIAVIIIVALLILFSFVPIGLWISALAAGVHVGIGTLVGMRLRRVSPRKVIAPLIKAHKAGLALTTNQLESHYLAGGNVDRVVDANIAAQRADIDLPFERAAAIDLAGRDVLEAVQMSVNPKVIETPFIAGVAMNGIEVKAKARITVRANIARLVGGAGEETIIARVGEGIVSTIGSSKHHTEVLENPDNISKTVLSKGLDSGTAFEILSIDIADVDISKNIGADLQTEQALADKNIAQAKAEERRAMAVATEQEMKARVQEMHAKVVEAESEVPLAMAEALRSGNISVKDYYNLKNIEADTGMRNAINKRTDQSDDESPEH</sequence>
<name>FLOA_STAA1</name>
<protein>
    <recommendedName>
        <fullName evidence="1">Flotillin-like protein FloA</fullName>
    </recommendedName>
</protein>
<gene>
    <name evidence="1" type="primary">floA</name>
    <name type="ordered locus">SAHV_1560</name>
</gene>
<organism>
    <name type="scientific">Staphylococcus aureus (strain Mu3 / ATCC 700698)</name>
    <dbReference type="NCBI Taxonomy" id="418127"/>
    <lineage>
        <taxon>Bacteria</taxon>
        <taxon>Bacillati</taxon>
        <taxon>Bacillota</taxon>
        <taxon>Bacilli</taxon>
        <taxon>Bacillales</taxon>
        <taxon>Staphylococcaceae</taxon>
        <taxon>Staphylococcus</taxon>
    </lineage>
</organism>
<accession>A7X2X2</accession>
<evidence type="ECO:0000255" key="1">
    <source>
        <dbReference type="HAMAP-Rule" id="MF_01562"/>
    </source>
</evidence>
<comment type="function">
    <text evidence="1">Found in functional membrane microdomains (FMM) that may be equivalent to eukaryotic membrane rafts. FMMs are highly dynamic and increase in number as cells age. Flotillins are thought to be important factors in membrane fluidity.</text>
</comment>
<comment type="subunit">
    <text evidence="1">Homooligomerizes.</text>
</comment>
<comment type="subcellular location">
    <subcellularLocation>
        <location evidence="1">Cell membrane</location>
        <topology evidence="1">Multi-pass membrane protein</topology>
    </subcellularLocation>
    <subcellularLocation>
        <location evidence="1">Membrane raft</location>
        <topology evidence="1">Multi-pass membrane protein</topology>
    </subcellularLocation>
</comment>
<comment type="similarity">
    <text evidence="1">Belongs to the flotillin-like FloA family.</text>
</comment>
<dbReference type="EMBL" id="AP009324">
    <property type="protein sequence ID" value="BAF78443.1"/>
    <property type="molecule type" value="Genomic_DNA"/>
</dbReference>
<dbReference type="RefSeq" id="WP_000492108.1">
    <property type="nucleotide sequence ID" value="NC_009782.1"/>
</dbReference>
<dbReference type="SMR" id="A7X2X2"/>
<dbReference type="KEGG" id="saw:SAHV_1560"/>
<dbReference type="HOGENOM" id="CLU_836378_0_0_9"/>
<dbReference type="GO" id="GO:0045121">
    <property type="term" value="C:membrane raft"/>
    <property type="evidence" value="ECO:0007669"/>
    <property type="project" value="UniProtKB-SubCell"/>
</dbReference>
<dbReference type="GO" id="GO:0005886">
    <property type="term" value="C:plasma membrane"/>
    <property type="evidence" value="ECO:0007669"/>
    <property type="project" value="UniProtKB-SubCell"/>
</dbReference>
<dbReference type="HAMAP" id="MF_01562">
    <property type="entry name" value="FloA"/>
    <property type="match status" value="1"/>
</dbReference>
<dbReference type="InterPro" id="IPR022853">
    <property type="entry name" value="FloA"/>
</dbReference>
<dbReference type="NCBIfam" id="NF010186">
    <property type="entry name" value="PRK13665.1"/>
    <property type="match status" value="1"/>
</dbReference>
<dbReference type="Pfam" id="PF12127">
    <property type="entry name" value="FloA"/>
    <property type="match status" value="1"/>
</dbReference>
<proteinExistence type="inferred from homology"/>
<reference key="1">
    <citation type="journal article" date="2008" name="Antimicrob. Agents Chemother.">
        <title>Mutated response regulator graR is responsible for phenotypic conversion of Staphylococcus aureus from heterogeneous vancomycin-intermediate resistance to vancomycin-intermediate resistance.</title>
        <authorList>
            <person name="Neoh H.-M."/>
            <person name="Cui L."/>
            <person name="Yuzawa H."/>
            <person name="Takeuchi F."/>
            <person name="Matsuo M."/>
            <person name="Hiramatsu K."/>
        </authorList>
    </citation>
    <scope>NUCLEOTIDE SEQUENCE [LARGE SCALE GENOMIC DNA]</scope>
    <source>
        <strain>Mu3 / ATCC 700698</strain>
    </source>
</reference>
<feature type="chain" id="PRO_1000069043" description="Flotillin-like protein FloA">
    <location>
        <begin position="1"/>
        <end position="329"/>
    </location>
</feature>
<feature type="transmembrane region" description="Helical" evidence="1">
    <location>
        <begin position="6"/>
        <end position="26"/>
    </location>
</feature>
<feature type="transmembrane region" description="Helical" evidence="1">
    <location>
        <begin position="27"/>
        <end position="47"/>
    </location>
</feature>
<keyword id="KW-1003">Cell membrane</keyword>
<keyword id="KW-0472">Membrane</keyword>
<keyword id="KW-0812">Transmembrane</keyword>
<keyword id="KW-1133">Transmembrane helix</keyword>